<organism>
    <name type="scientific">Ovis aries</name>
    <name type="common">Sheep</name>
    <dbReference type="NCBI Taxonomy" id="9940"/>
    <lineage>
        <taxon>Eukaryota</taxon>
        <taxon>Metazoa</taxon>
        <taxon>Chordata</taxon>
        <taxon>Craniata</taxon>
        <taxon>Vertebrata</taxon>
        <taxon>Euteleostomi</taxon>
        <taxon>Mammalia</taxon>
        <taxon>Eutheria</taxon>
        <taxon>Laurasiatheria</taxon>
        <taxon>Artiodactyla</taxon>
        <taxon>Ruminantia</taxon>
        <taxon>Pecora</taxon>
        <taxon>Bovidae</taxon>
        <taxon>Caprinae</taxon>
        <taxon>Ovis</taxon>
    </lineage>
</organism>
<proteinExistence type="inferred from homology"/>
<gene>
    <name type="primary">BMP15</name>
    <name type="synonym">GDF9B</name>
</gene>
<sequence>MVLLSILRILLWGLVLFMEHRVQMTQVGQPSIAHLPEAPTLPLIQELLEEAPGKQQRKPRVLGHPLRYMLELYQRSADASGHPRENRTIGATMVRLVRPLASVARPLRGSWHIQTLDFPLRPNRVAYQLVRATVVYRHQLHLTHSHLSCHVEPWVQKSPTNHFPSSGRGSSKPSLLPKTWTEMDIMEHVGQKLWNHKGRRVLRLRFVCQQPRGSEVLEFWWHGTSSLDTVFLLLYFNDTQSVQKTKPLPKGLKEFTEKDPSLLLRRARQAGSIASEVPGPSREHDGPESNQCSLHPFQVSFQQLGWDHWIIAPHLYTPNYCKGVCPRVLHYGLNSPNHAIIQNLVSELVDQNVPQPSCVPYKYVPISILLIEANGSILYKEYEGMIAQSCTCR</sequence>
<dbReference type="EMBL" id="AF236079">
    <property type="protein sequence ID" value="AAF81688.1"/>
    <property type="molecule type" value="Genomic_DNA"/>
</dbReference>
<dbReference type="EMBL" id="AF236078">
    <property type="protein sequence ID" value="AAF81688.1"/>
    <property type="status" value="JOINED"/>
    <property type="molecule type" value="Genomic_DNA"/>
</dbReference>
<dbReference type="RefSeq" id="NP_001108239.1">
    <property type="nucleotide sequence ID" value="NM_001114767.2"/>
</dbReference>
<dbReference type="STRING" id="9940.ENSOARP00000010055"/>
<dbReference type="GlyCosmos" id="Q9MZE2">
    <property type="glycosylation" value="3 sites, No reported glycans"/>
</dbReference>
<dbReference type="PaxDb" id="9940-ENSOARP00000010055"/>
<dbReference type="Ensembl" id="ENSOART00215091236">
    <property type="protein sequence ID" value="ENSOARP00215049790"/>
    <property type="gene ID" value="ENSOARG00215054017"/>
</dbReference>
<dbReference type="Ensembl" id="ENSOART00220066867">
    <property type="protein sequence ID" value="ENSOARP00220035824"/>
    <property type="gene ID" value="ENSOARG00220040342"/>
</dbReference>
<dbReference type="Ensembl" id="ENSOART00225080424">
    <property type="protein sequence ID" value="ENSOARP00225041740"/>
    <property type="gene ID" value="ENSOARG00225048382"/>
</dbReference>
<dbReference type="GeneID" id="100141303"/>
<dbReference type="KEGG" id="oas:100141303"/>
<dbReference type="CTD" id="9210"/>
<dbReference type="eggNOG" id="KOG3900">
    <property type="taxonomic scope" value="Eukaryota"/>
</dbReference>
<dbReference type="OrthoDB" id="6427922at2759"/>
<dbReference type="Proteomes" id="UP000002356">
    <property type="component" value="Unplaced"/>
</dbReference>
<dbReference type="GO" id="GO:0005615">
    <property type="term" value="C:extracellular space"/>
    <property type="evidence" value="ECO:0007669"/>
    <property type="project" value="UniProtKB-KW"/>
</dbReference>
<dbReference type="GO" id="GO:0005125">
    <property type="term" value="F:cytokine activity"/>
    <property type="evidence" value="ECO:0007669"/>
    <property type="project" value="UniProtKB-KW"/>
</dbReference>
<dbReference type="GO" id="GO:0008083">
    <property type="term" value="F:growth factor activity"/>
    <property type="evidence" value="ECO:0007669"/>
    <property type="project" value="UniProtKB-KW"/>
</dbReference>
<dbReference type="CDD" id="cd19402">
    <property type="entry name" value="TGF_beta_GDF9B"/>
    <property type="match status" value="1"/>
</dbReference>
<dbReference type="FunFam" id="2.10.90.10:FF:000012">
    <property type="entry name" value="Growth/differentiation factor 9 (Predicted)"/>
    <property type="match status" value="1"/>
</dbReference>
<dbReference type="Gene3D" id="2.10.90.10">
    <property type="entry name" value="Cystine-knot cytokines"/>
    <property type="match status" value="1"/>
</dbReference>
<dbReference type="InterPro" id="IPR029034">
    <property type="entry name" value="Cystine-knot_cytokine"/>
</dbReference>
<dbReference type="InterPro" id="IPR001839">
    <property type="entry name" value="TGF-b_C"/>
</dbReference>
<dbReference type="InterPro" id="IPR015615">
    <property type="entry name" value="TGF-beta-rel"/>
</dbReference>
<dbReference type="InterPro" id="IPR017948">
    <property type="entry name" value="TGFb_CS"/>
</dbReference>
<dbReference type="PANTHER" id="PTHR11848:SF22">
    <property type="entry name" value="BONE MORPHOGENETIC PROTEIN 15"/>
    <property type="match status" value="1"/>
</dbReference>
<dbReference type="PANTHER" id="PTHR11848">
    <property type="entry name" value="TGF-BETA FAMILY"/>
    <property type="match status" value="1"/>
</dbReference>
<dbReference type="Pfam" id="PF00019">
    <property type="entry name" value="TGF_beta"/>
    <property type="match status" value="1"/>
</dbReference>
<dbReference type="PRINTS" id="PR00669">
    <property type="entry name" value="INHIBINA"/>
</dbReference>
<dbReference type="SMART" id="SM00204">
    <property type="entry name" value="TGFB"/>
    <property type="match status" value="1"/>
</dbReference>
<dbReference type="SUPFAM" id="SSF57501">
    <property type="entry name" value="Cystine-knot cytokines"/>
    <property type="match status" value="1"/>
</dbReference>
<dbReference type="PROSITE" id="PS00250">
    <property type="entry name" value="TGF_BETA_1"/>
    <property type="match status" value="1"/>
</dbReference>
<dbReference type="PROSITE" id="PS51362">
    <property type="entry name" value="TGF_BETA_2"/>
    <property type="match status" value="1"/>
</dbReference>
<name>BMP15_SHEEP</name>
<protein>
    <recommendedName>
        <fullName>Bone morphogenetic protein 15</fullName>
        <shortName>BMP-15</shortName>
    </recommendedName>
    <alternativeName>
        <fullName>Growth/differentiation factor 9B</fullName>
        <shortName>GDF-9B</shortName>
    </alternativeName>
</protein>
<reference key="1">
    <citation type="journal article" date="2000" name="Nat. Genet.">
        <title>Mutations in an oocyte-derived growth factor gene (BMP15) cause increased ovulation rate and infertility in a dosage-sensitive manner.</title>
        <authorList>
            <person name="Galloway S.M."/>
            <person name="McNatty K.P."/>
            <person name="Cambridge L.M."/>
            <person name="Laitinen M.P.E."/>
            <person name="Juengel J.L."/>
            <person name="Jokiranta S."/>
            <person name="McLaren R.J."/>
            <person name="Luiro K."/>
            <person name="Dodds K.D."/>
            <person name="Montgomery G.W."/>
            <person name="Beattie A.E."/>
            <person name="Davis G.H."/>
            <person name="Ritvos O."/>
        </authorList>
    </citation>
    <scope>NUCLEOTIDE SEQUENCE [GENOMIC DNA]</scope>
</reference>
<feature type="signal peptide" evidence="2">
    <location>
        <begin position="1"/>
        <end position="25"/>
    </location>
</feature>
<feature type="propeptide" id="PRO_0000033896" evidence="1">
    <location>
        <begin position="26"/>
        <end position="268"/>
    </location>
</feature>
<feature type="chain" id="PRO_0000033897" description="Bone morphogenetic protein 15">
    <location>
        <begin position="269"/>
        <end position="393"/>
    </location>
</feature>
<feature type="glycosylation site" description="N-linked (GlcNAc...) asparagine" evidence="2">
    <location>
        <position position="86"/>
    </location>
</feature>
<feature type="glycosylation site" description="N-linked (GlcNAc...) asparagine" evidence="2">
    <location>
        <position position="237"/>
    </location>
</feature>
<feature type="glycosylation site" description="N-linked (GlcNAc...) asparagine" evidence="2">
    <location>
        <position position="374"/>
    </location>
</feature>
<feature type="disulfide bond" evidence="1">
    <location>
        <begin position="292"/>
        <end position="358"/>
    </location>
</feature>
<feature type="disulfide bond" evidence="1">
    <location>
        <begin position="321"/>
        <end position="390"/>
    </location>
</feature>
<feature type="disulfide bond" evidence="1">
    <location>
        <begin position="325"/>
        <end position="392"/>
    </location>
</feature>
<comment type="function">
    <text evidence="1">May be involved in follicular development. Oocyte-specific growth/differentiation factor that stimulates folliculogenesis and granulosa cell (GC) growth (By similarity).</text>
</comment>
<comment type="subunit">
    <text evidence="1">Homodimer (By similarity). But, in contrast to other members of this family, cannot be disulfide-linked.</text>
</comment>
<comment type="subcellular location">
    <subcellularLocation>
        <location>Secreted</location>
    </subcellularLocation>
</comment>
<comment type="similarity">
    <text evidence="3">Belongs to the TGF-beta family.</text>
</comment>
<keyword id="KW-0202">Cytokine</keyword>
<keyword id="KW-1015">Disulfide bond</keyword>
<keyword id="KW-0325">Glycoprotein</keyword>
<keyword id="KW-0339">Growth factor</keyword>
<keyword id="KW-1185">Reference proteome</keyword>
<keyword id="KW-0964">Secreted</keyword>
<keyword id="KW-0732">Signal</keyword>
<accession>Q9MZE2</accession>
<evidence type="ECO:0000250" key="1"/>
<evidence type="ECO:0000255" key="2"/>
<evidence type="ECO:0000305" key="3"/>